<organism>
    <name type="scientific">Burkholderia cenocepacia (strain ATCC BAA-245 / DSM 16553 / LMG 16656 / NCTC 13227 / J2315 / CF5610)</name>
    <name type="common">Burkholderia cepacia (strain J2315)</name>
    <dbReference type="NCBI Taxonomy" id="216591"/>
    <lineage>
        <taxon>Bacteria</taxon>
        <taxon>Pseudomonadati</taxon>
        <taxon>Pseudomonadota</taxon>
        <taxon>Betaproteobacteria</taxon>
        <taxon>Burkholderiales</taxon>
        <taxon>Burkholderiaceae</taxon>
        <taxon>Burkholderia</taxon>
        <taxon>Burkholderia cepacia complex</taxon>
    </lineage>
</organism>
<sequence>MVVAVYPGTFDPLTRGHEDLVRRASSIFDTLVVGVADSRAKKPFFSLEERLTIANEVLGHYPNVKVMSFTGLLKDFVRVNNARVIVRGLRAVSDFEYEFQMAGMNRYLLPDVETMFMTPSDQYQFISGTIVREIAQLGGDVSKFVFPSVEKWLTEKVTAMGGPAA</sequence>
<proteinExistence type="inferred from homology"/>
<reference key="1">
    <citation type="journal article" date="2009" name="J. Bacteriol.">
        <title>The genome of Burkholderia cenocepacia J2315, an epidemic pathogen of cystic fibrosis patients.</title>
        <authorList>
            <person name="Holden M.T."/>
            <person name="Seth-Smith H.M."/>
            <person name="Crossman L.C."/>
            <person name="Sebaihia M."/>
            <person name="Bentley S.D."/>
            <person name="Cerdeno-Tarraga A.M."/>
            <person name="Thomson N.R."/>
            <person name="Bason N."/>
            <person name="Quail M.A."/>
            <person name="Sharp S."/>
            <person name="Cherevach I."/>
            <person name="Churcher C."/>
            <person name="Goodhead I."/>
            <person name="Hauser H."/>
            <person name="Holroyd N."/>
            <person name="Mungall K."/>
            <person name="Scott P."/>
            <person name="Walker D."/>
            <person name="White B."/>
            <person name="Rose H."/>
            <person name="Iversen P."/>
            <person name="Mil-Homens D."/>
            <person name="Rocha E.P."/>
            <person name="Fialho A.M."/>
            <person name="Baldwin A."/>
            <person name="Dowson C."/>
            <person name="Barrell B.G."/>
            <person name="Govan J.R."/>
            <person name="Vandamme P."/>
            <person name="Hart C.A."/>
            <person name="Mahenthiralingam E."/>
            <person name="Parkhill J."/>
        </authorList>
    </citation>
    <scope>NUCLEOTIDE SEQUENCE [LARGE SCALE GENOMIC DNA]</scope>
    <source>
        <strain>ATCC BAA-245 / DSM 16553 / LMG 16656 / NCTC 13227 / J2315 / CF5610</strain>
    </source>
</reference>
<comment type="function">
    <text evidence="1">Reversibly transfers an adenylyl group from ATP to 4'-phosphopantetheine, yielding dephospho-CoA (dPCoA) and pyrophosphate.</text>
</comment>
<comment type="catalytic activity">
    <reaction evidence="1">
        <text>(R)-4'-phosphopantetheine + ATP + H(+) = 3'-dephospho-CoA + diphosphate</text>
        <dbReference type="Rhea" id="RHEA:19801"/>
        <dbReference type="ChEBI" id="CHEBI:15378"/>
        <dbReference type="ChEBI" id="CHEBI:30616"/>
        <dbReference type="ChEBI" id="CHEBI:33019"/>
        <dbReference type="ChEBI" id="CHEBI:57328"/>
        <dbReference type="ChEBI" id="CHEBI:61723"/>
        <dbReference type="EC" id="2.7.7.3"/>
    </reaction>
</comment>
<comment type="cofactor">
    <cofactor evidence="1">
        <name>Mg(2+)</name>
        <dbReference type="ChEBI" id="CHEBI:18420"/>
    </cofactor>
</comment>
<comment type="pathway">
    <text evidence="1">Cofactor biosynthesis; coenzyme A biosynthesis; CoA from (R)-pantothenate: step 4/5.</text>
</comment>
<comment type="subunit">
    <text evidence="1">Homohexamer.</text>
</comment>
<comment type="subcellular location">
    <subcellularLocation>
        <location evidence="1">Cytoplasm</location>
    </subcellularLocation>
</comment>
<comment type="similarity">
    <text evidence="1">Belongs to the bacterial CoaD family.</text>
</comment>
<accession>B4EAQ8</accession>
<feature type="chain" id="PRO_1000096772" description="Phosphopantetheine adenylyltransferase">
    <location>
        <begin position="1"/>
        <end position="165"/>
    </location>
</feature>
<feature type="binding site" evidence="1">
    <location>
        <begin position="9"/>
        <end position="10"/>
    </location>
    <ligand>
        <name>ATP</name>
        <dbReference type="ChEBI" id="CHEBI:30616"/>
    </ligand>
</feature>
<feature type="binding site" evidence="1">
    <location>
        <position position="9"/>
    </location>
    <ligand>
        <name>substrate</name>
    </ligand>
</feature>
<feature type="binding site" evidence="1">
    <location>
        <position position="17"/>
    </location>
    <ligand>
        <name>ATP</name>
        <dbReference type="ChEBI" id="CHEBI:30616"/>
    </ligand>
</feature>
<feature type="binding site" evidence="1">
    <location>
        <position position="41"/>
    </location>
    <ligand>
        <name>substrate</name>
    </ligand>
</feature>
<feature type="binding site" evidence="1">
    <location>
        <position position="73"/>
    </location>
    <ligand>
        <name>substrate</name>
    </ligand>
</feature>
<feature type="binding site" evidence="1">
    <location>
        <position position="87"/>
    </location>
    <ligand>
        <name>substrate</name>
    </ligand>
</feature>
<feature type="binding site" evidence="1">
    <location>
        <begin position="88"/>
        <end position="90"/>
    </location>
    <ligand>
        <name>ATP</name>
        <dbReference type="ChEBI" id="CHEBI:30616"/>
    </ligand>
</feature>
<feature type="binding site" evidence="1">
    <location>
        <position position="98"/>
    </location>
    <ligand>
        <name>ATP</name>
        <dbReference type="ChEBI" id="CHEBI:30616"/>
    </ligand>
</feature>
<feature type="binding site" evidence="1">
    <location>
        <begin position="123"/>
        <end position="129"/>
    </location>
    <ligand>
        <name>ATP</name>
        <dbReference type="ChEBI" id="CHEBI:30616"/>
    </ligand>
</feature>
<feature type="site" description="Transition state stabilizer" evidence="1">
    <location>
        <position position="17"/>
    </location>
</feature>
<dbReference type="EC" id="2.7.7.3" evidence="1"/>
<dbReference type="EMBL" id="AM747720">
    <property type="protein sequence ID" value="CAR51103.1"/>
    <property type="molecule type" value="Genomic_DNA"/>
</dbReference>
<dbReference type="RefSeq" id="WP_006477773.1">
    <property type="nucleotide sequence ID" value="NC_011000.1"/>
</dbReference>
<dbReference type="SMR" id="B4EAQ8"/>
<dbReference type="GeneID" id="83049603"/>
<dbReference type="KEGG" id="bcj:BCAL0795"/>
<dbReference type="eggNOG" id="COG0669">
    <property type="taxonomic scope" value="Bacteria"/>
</dbReference>
<dbReference type="HOGENOM" id="CLU_100149_0_1_4"/>
<dbReference type="BioCyc" id="BCEN216591:G1G1V-888-MONOMER"/>
<dbReference type="UniPathway" id="UPA00241">
    <property type="reaction ID" value="UER00355"/>
</dbReference>
<dbReference type="Proteomes" id="UP000001035">
    <property type="component" value="Chromosome 1"/>
</dbReference>
<dbReference type="GO" id="GO:0005737">
    <property type="term" value="C:cytoplasm"/>
    <property type="evidence" value="ECO:0007669"/>
    <property type="project" value="UniProtKB-SubCell"/>
</dbReference>
<dbReference type="GO" id="GO:0005524">
    <property type="term" value="F:ATP binding"/>
    <property type="evidence" value="ECO:0007669"/>
    <property type="project" value="UniProtKB-KW"/>
</dbReference>
<dbReference type="GO" id="GO:0004595">
    <property type="term" value="F:pantetheine-phosphate adenylyltransferase activity"/>
    <property type="evidence" value="ECO:0007669"/>
    <property type="project" value="UniProtKB-UniRule"/>
</dbReference>
<dbReference type="GO" id="GO:0015937">
    <property type="term" value="P:coenzyme A biosynthetic process"/>
    <property type="evidence" value="ECO:0007669"/>
    <property type="project" value="UniProtKB-UniRule"/>
</dbReference>
<dbReference type="CDD" id="cd02163">
    <property type="entry name" value="PPAT"/>
    <property type="match status" value="1"/>
</dbReference>
<dbReference type="Gene3D" id="3.40.50.620">
    <property type="entry name" value="HUPs"/>
    <property type="match status" value="1"/>
</dbReference>
<dbReference type="HAMAP" id="MF_00151">
    <property type="entry name" value="PPAT_bact"/>
    <property type="match status" value="1"/>
</dbReference>
<dbReference type="InterPro" id="IPR004821">
    <property type="entry name" value="Cyt_trans-like"/>
</dbReference>
<dbReference type="InterPro" id="IPR001980">
    <property type="entry name" value="PPAT"/>
</dbReference>
<dbReference type="InterPro" id="IPR014729">
    <property type="entry name" value="Rossmann-like_a/b/a_fold"/>
</dbReference>
<dbReference type="NCBIfam" id="TIGR01510">
    <property type="entry name" value="coaD_prev_kdtB"/>
    <property type="match status" value="1"/>
</dbReference>
<dbReference type="NCBIfam" id="TIGR00125">
    <property type="entry name" value="cyt_tran_rel"/>
    <property type="match status" value="1"/>
</dbReference>
<dbReference type="PANTHER" id="PTHR21342">
    <property type="entry name" value="PHOSPHOPANTETHEINE ADENYLYLTRANSFERASE"/>
    <property type="match status" value="1"/>
</dbReference>
<dbReference type="PANTHER" id="PTHR21342:SF1">
    <property type="entry name" value="PHOSPHOPANTETHEINE ADENYLYLTRANSFERASE"/>
    <property type="match status" value="1"/>
</dbReference>
<dbReference type="Pfam" id="PF01467">
    <property type="entry name" value="CTP_transf_like"/>
    <property type="match status" value="1"/>
</dbReference>
<dbReference type="PRINTS" id="PR01020">
    <property type="entry name" value="LPSBIOSNTHSS"/>
</dbReference>
<dbReference type="SUPFAM" id="SSF52374">
    <property type="entry name" value="Nucleotidylyl transferase"/>
    <property type="match status" value="1"/>
</dbReference>
<keyword id="KW-0067">ATP-binding</keyword>
<keyword id="KW-0173">Coenzyme A biosynthesis</keyword>
<keyword id="KW-0963">Cytoplasm</keyword>
<keyword id="KW-0460">Magnesium</keyword>
<keyword id="KW-0547">Nucleotide-binding</keyword>
<keyword id="KW-0548">Nucleotidyltransferase</keyword>
<keyword id="KW-0808">Transferase</keyword>
<gene>
    <name evidence="1" type="primary">coaD</name>
    <name type="ordered locus">BceJ2315_07880</name>
    <name type="ORF">BCAL0795</name>
</gene>
<evidence type="ECO:0000255" key="1">
    <source>
        <dbReference type="HAMAP-Rule" id="MF_00151"/>
    </source>
</evidence>
<protein>
    <recommendedName>
        <fullName evidence="1">Phosphopantetheine adenylyltransferase</fullName>
        <ecNumber evidence="1">2.7.7.3</ecNumber>
    </recommendedName>
    <alternativeName>
        <fullName evidence="1">Dephospho-CoA pyrophosphorylase</fullName>
    </alternativeName>
    <alternativeName>
        <fullName evidence="1">Pantetheine-phosphate adenylyltransferase</fullName>
        <shortName evidence="1">PPAT</shortName>
    </alternativeName>
</protein>
<name>COAD_BURCJ</name>